<reference key="1">
    <citation type="journal article" date="2003" name="Proc. Natl. Acad. Sci. U.S.A.">
        <title>The genome sequence of Blochmannia floridanus: comparative analysis of reduced genomes.</title>
        <authorList>
            <person name="Gil R."/>
            <person name="Silva F.J."/>
            <person name="Zientz E."/>
            <person name="Delmotte F."/>
            <person name="Gonzalez-Candelas F."/>
            <person name="Latorre A."/>
            <person name="Rausell C."/>
            <person name="Kamerbeek J."/>
            <person name="Gadau J."/>
            <person name="Hoelldobler B."/>
            <person name="van Ham R.C.H.J."/>
            <person name="Gross R."/>
            <person name="Moya A."/>
        </authorList>
    </citation>
    <scope>NUCLEOTIDE SEQUENCE [LARGE SCALE GENOMIC DNA]</scope>
</reference>
<organism>
    <name type="scientific">Blochmanniella floridana</name>
    <dbReference type="NCBI Taxonomy" id="203907"/>
    <lineage>
        <taxon>Bacteria</taxon>
        <taxon>Pseudomonadati</taxon>
        <taxon>Pseudomonadota</taxon>
        <taxon>Gammaproteobacteria</taxon>
        <taxon>Enterobacterales</taxon>
        <taxon>Enterobacteriaceae</taxon>
        <taxon>ant endosymbionts</taxon>
        <taxon>Candidatus Blochmanniella</taxon>
    </lineage>
</organism>
<feature type="chain" id="PRO_0000120811" description="Uracil phosphoribosyltransferase">
    <location>
        <begin position="1"/>
        <end position="208"/>
    </location>
</feature>
<feature type="binding site" evidence="1">
    <location>
        <position position="78"/>
    </location>
    <ligand>
        <name>5-phospho-alpha-D-ribose 1-diphosphate</name>
        <dbReference type="ChEBI" id="CHEBI:58017"/>
    </ligand>
</feature>
<feature type="binding site" evidence="1">
    <location>
        <position position="103"/>
    </location>
    <ligand>
        <name>5-phospho-alpha-D-ribose 1-diphosphate</name>
        <dbReference type="ChEBI" id="CHEBI:58017"/>
    </ligand>
</feature>
<feature type="binding site" evidence="1">
    <location>
        <begin position="130"/>
        <end position="138"/>
    </location>
    <ligand>
        <name>5-phospho-alpha-D-ribose 1-diphosphate</name>
        <dbReference type="ChEBI" id="CHEBI:58017"/>
    </ligand>
</feature>
<feature type="binding site" evidence="1">
    <location>
        <position position="193"/>
    </location>
    <ligand>
        <name>uracil</name>
        <dbReference type="ChEBI" id="CHEBI:17568"/>
    </ligand>
</feature>
<feature type="binding site" evidence="1">
    <location>
        <begin position="198"/>
        <end position="200"/>
    </location>
    <ligand>
        <name>uracil</name>
        <dbReference type="ChEBI" id="CHEBI:17568"/>
    </ligand>
</feature>
<feature type="binding site" evidence="1">
    <location>
        <position position="199"/>
    </location>
    <ligand>
        <name>5-phospho-alpha-D-ribose 1-diphosphate</name>
        <dbReference type="ChEBI" id="CHEBI:58017"/>
    </ligand>
</feature>
<evidence type="ECO:0000255" key="1">
    <source>
        <dbReference type="HAMAP-Rule" id="MF_01218"/>
    </source>
</evidence>
<dbReference type="EC" id="2.4.2.9" evidence="1"/>
<dbReference type="EMBL" id="BX248583">
    <property type="protein sequence ID" value="CAD83206.1"/>
    <property type="molecule type" value="Genomic_DNA"/>
</dbReference>
<dbReference type="SMR" id="Q7VRS9"/>
<dbReference type="STRING" id="203907.Bfl520"/>
<dbReference type="KEGG" id="bfl:Bfl520"/>
<dbReference type="eggNOG" id="COG0035">
    <property type="taxonomic scope" value="Bacteria"/>
</dbReference>
<dbReference type="HOGENOM" id="CLU_067096_2_2_6"/>
<dbReference type="OrthoDB" id="9781675at2"/>
<dbReference type="UniPathway" id="UPA00574">
    <property type="reaction ID" value="UER00636"/>
</dbReference>
<dbReference type="Proteomes" id="UP000002192">
    <property type="component" value="Chromosome"/>
</dbReference>
<dbReference type="GO" id="GO:0005525">
    <property type="term" value="F:GTP binding"/>
    <property type="evidence" value="ECO:0007669"/>
    <property type="project" value="UniProtKB-KW"/>
</dbReference>
<dbReference type="GO" id="GO:0000287">
    <property type="term" value="F:magnesium ion binding"/>
    <property type="evidence" value="ECO:0007669"/>
    <property type="project" value="UniProtKB-UniRule"/>
</dbReference>
<dbReference type="GO" id="GO:0004845">
    <property type="term" value="F:uracil phosphoribosyltransferase activity"/>
    <property type="evidence" value="ECO:0007669"/>
    <property type="project" value="UniProtKB-UniRule"/>
</dbReference>
<dbReference type="GO" id="GO:0044206">
    <property type="term" value="P:UMP salvage"/>
    <property type="evidence" value="ECO:0007669"/>
    <property type="project" value="UniProtKB-UniRule"/>
</dbReference>
<dbReference type="GO" id="GO:0006223">
    <property type="term" value="P:uracil salvage"/>
    <property type="evidence" value="ECO:0007669"/>
    <property type="project" value="InterPro"/>
</dbReference>
<dbReference type="CDD" id="cd06223">
    <property type="entry name" value="PRTases_typeI"/>
    <property type="match status" value="1"/>
</dbReference>
<dbReference type="FunFam" id="3.40.50.2020:FF:000003">
    <property type="entry name" value="Uracil phosphoribosyltransferase"/>
    <property type="match status" value="1"/>
</dbReference>
<dbReference type="Gene3D" id="3.40.50.2020">
    <property type="match status" value="1"/>
</dbReference>
<dbReference type="HAMAP" id="MF_01218_B">
    <property type="entry name" value="Upp_B"/>
    <property type="match status" value="1"/>
</dbReference>
<dbReference type="InterPro" id="IPR000836">
    <property type="entry name" value="PRibTrfase_dom"/>
</dbReference>
<dbReference type="InterPro" id="IPR029057">
    <property type="entry name" value="PRTase-like"/>
</dbReference>
<dbReference type="InterPro" id="IPR034332">
    <property type="entry name" value="Upp_B"/>
</dbReference>
<dbReference type="InterPro" id="IPR050054">
    <property type="entry name" value="UPRTase/APRTase"/>
</dbReference>
<dbReference type="InterPro" id="IPR005765">
    <property type="entry name" value="Ura_phspho_trans"/>
</dbReference>
<dbReference type="NCBIfam" id="NF001097">
    <property type="entry name" value="PRK00129.1"/>
    <property type="match status" value="1"/>
</dbReference>
<dbReference type="NCBIfam" id="TIGR01091">
    <property type="entry name" value="upp"/>
    <property type="match status" value="1"/>
</dbReference>
<dbReference type="PANTHER" id="PTHR32315">
    <property type="entry name" value="ADENINE PHOSPHORIBOSYLTRANSFERASE"/>
    <property type="match status" value="1"/>
</dbReference>
<dbReference type="PANTHER" id="PTHR32315:SF4">
    <property type="entry name" value="URACIL PHOSPHORIBOSYLTRANSFERASE, CHLOROPLASTIC"/>
    <property type="match status" value="1"/>
</dbReference>
<dbReference type="Pfam" id="PF14681">
    <property type="entry name" value="UPRTase"/>
    <property type="match status" value="1"/>
</dbReference>
<dbReference type="SUPFAM" id="SSF53271">
    <property type="entry name" value="PRTase-like"/>
    <property type="match status" value="1"/>
</dbReference>
<accession>Q7VRS9</accession>
<name>UPP_BLOFL</name>
<gene>
    <name evidence="1" type="primary">upp</name>
    <name type="ordered locus">Bfl520</name>
</gene>
<comment type="function">
    <text evidence="1">Catalyzes the conversion of uracil and 5-phospho-alpha-D-ribose 1-diphosphate (PRPP) to UMP and diphosphate.</text>
</comment>
<comment type="catalytic activity">
    <reaction evidence="1">
        <text>UMP + diphosphate = 5-phospho-alpha-D-ribose 1-diphosphate + uracil</text>
        <dbReference type="Rhea" id="RHEA:13017"/>
        <dbReference type="ChEBI" id="CHEBI:17568"/>
        <dbReference type="ChEBI" id="CHEBI:33019"/>
        <dbReference type="ChEBI" id="CHEBI:57865"/>
        <dbReference type="ChEBI" id="CHEBI:58017"/>
        <dbReference type="EC" id="2.4.2.9"/>
    </reaction>
</comment>
<comment type="cofactor">
    <cofactor evidence="1">
        <name>Mg(2+)</name>
        <dbReference type="ChEBI" id="CHEBI:18420"/>
    </cofactor>
    <text evidence="1">Binds 1 Mg(2+) ion per subunit. The magnesium is bound as Mg-PRPP.</text>
</comment>
<comment type="activity regulation">
    <text evidence="1">Allosterically activated by GTP.</text>
</comment>
<comment type="pathway">
    <text evidence="1">Pyrimidine metabolism; UMP biosynthesis via salvage pathway; UMP from uracil: step 1/1.</text>
</comment>
<comment type="similarity">
    <text evidence="1">Belongs to the UPRTase family.</text>
</comment>
<keyword id="KW-0021">Allosteric enzyme</keyword>
<keyword id="KW-0328">Glycosyltransferase</keyword>
<keyword id="KW-0342">GTP-binding</keyword>
<keyword id="KW-0460">Magnesium</keyword>
<keyword id="KW-0547">Nucleotide-binding</keyword>
<keyword id="KW-1185">Reference proteome</keyword>
<keyword id="KW-0808">Transferase</keyword>
<proteinExistence type="inferred from homology"/>
<sequence length="208" mass="22977">MKIIEIRHPLVQHKLGLMRINDISTKRFRELSSELSSLLTYVATDDLEIETVIIKGWNGLVKIARIKGKKITVVPILRAGLGMMDGVLEHVPSARISMIGVYRDEITLEPIPYFHKLVSRINERMAMVLDPMLATGGTVIATVDLLKKAGCHNIKILSLVAAPEGIAALEKKHPDVELYLASIDQKLNKYGYIIPGLGDAGDKIFGTK</sequence>
<protein>
    <recommendedName>
        <fullName evidence="1">Uracil phosphoribosyltransferase</fullName>
        <ecNumber evidence="1">2.4.2.9</ecNumber>
    </recommendedName>
    <alternativeName>
        <fullName evidence="1">UMP pyrophosphorylase</fullName>
    </alternativeName>
    <alternativeName>
        <fullName evidence="1">UPRTase</fullName>
    </alternativeName>
</protein>